<gene>
    <name evidence="1" type="primary">plsY</name>
    <name type="synonym">ygiH</name>
    <name type="ordered locus">SeAg_B3393</name>
</gene>
<feature type="chain" id="PRO_1000136114" description="Glycerol-3-phosphate acyltransferase">
    <location>
        <begin position="1"/>
        <end position="203"/>
    </location>
</feature>
<feature type="topological domain" description="Periplasmic" evidence="1">
    <location>
        <begin position="1"/>
        <end position="3"/>
    </location>
</feature>
<feature type="transmembrane region" description="Helical" evidence="1">
    <location>
        <begin position="4"/>
        <end position="24"/>
    </location>
</feature>
<feature type="topological domain" description="Cytoplasmic" evidence="1">
    <location>
        <begin position="25"/>
        <end position="52"/>
    </location>
</feature>
<feature type="transmembrane region" description="Helical" evidence="1">
    <location>
        <begin position="53"/>
        <end position="73"/>
    </location>
</feature>
<feature type="topological domain" description="Periplasmic" evidence="1">
    <location>
        <begin position="74"/>
        <end position="80"/>
    </location>
</feature>
<feature type="transmembrane region" description="Helical" evidence="1">
    <location>
        <begin position="81"/>
        <end position="101"/>
    </location>
</feature>
<feature type="topological domain" description="Cytoplasmic" evidence="1">
    <location>
        <begin position="102"/>
        <end position="111"/>
    </location>
</feature>
<feature type="transmembrane region" description="Helical" evidence="1">
    <location>
        <begin position="112"/>
        <end position="132"/>
    </location>
</feature>
<feature type="topological domain" description="Periplasmic" evidence="1">
    <location>
        <begin position="133"/>
        <end position="137"/>
    </location>
</feature>
<feature type="transmembrane region" description="Helical" evidence="1">
    <location>
        <begin position="138"/>
        <end position="158"/>
    </location>
</feature>
<feature type="topological domain" description="Cytoplasmic" evidence="1">
    <location>
        <begin position="159"/>
        <end position="203"/>
    </location>
</feature>
<organism>
    <name type="scientific">Salmonella agona (strain SL483)</name>
    <dbReference type="NCBI Taxonomy" id="454166"/>
    <lineage>
        <taxon>Bacteria</taxon>
        <taxon>Pseudomonadati</taxon>
        <taxon>Pseudomonadota</taxon>
        <taxon>Gammaproteobacteria</taxon>
        <taxon>Enterobacterales</taxon>
        <taxon>Enterobacteriaceae</taxon>
        <taxon>Salmonella</taxon>
    </lineage>
</organism>
<evidence type="ECO:0000255" key="1">
    <source>
        <dbReference type="HAMAP-Rule" id="MF_01043"/>
    </source>
</evidence>
<proteinExistence type="inferred from homology"/>
<accession>B5F6A3</accession>
<keyword id="KW-0997">Cell inner membrane</keyword>
<keyword id="KW-1003">Cell membrane</keyword>
<keyword id="KW-0444">Lipid biosynthesis</keyword>
<keyword id="KW-0443">Lipid metabolism</keyword>
<keyword id="KW-0472">Membrane</keyword>
<keyword id="KW-0594">Phospholipid biosynthesis</keyword>
<keyword id="KW-1208">Phospholipid metabolism</keyword>
<keyword id="KW-0808">Transferase</keyword>
<keyword id="KW-0812">Transmembrane</keyword>
<keyword id="KW-1133">Transmembrane helix</keyword>
<sequence>MSAIAPGMILFAYLCGSISSAILVCRIAGLPDPRESGSGNPGATNVLRIGGKGAAVAVLIFDILKGMLPVWGAYALGVTPFWLGLIAIAACLGHIWPVFFGFKGGKGVATAFGAIAPIGWDLTGVMAGTWLLTVLLSGYSSLGAIVSALIAPFYVWWFKPQFTFPVSMLSCLILLRHHDNIQRLWRRQETKIWTKLKKKRQKD</sequence>
<name>PLSY_SALA4</name>
<reference key="1">
    <citation type="journal article" date="2011" name="J. Bacteriol.">
        <title>Comparative genomics of 28 Salmonella enterica isolates: evidence for CRISPR-mediated adaptive sublineage evolution.</title>
        <authorList>
            <person name="Fricke W.F."/>
            <person name="Mammel M.K."/>
            <person name="McDermott P.F."/>
            <person name="Tartera C."/>
            <person name="White D.G."/>
            <person name="Leclerc J.E."/>
            <person name="Ravel J."/>
            <person name="Cebula T.A."/>
        </authorList>
    </citation>
    <scope>NUCLEOTIDE SEQUENCE [LARGE SCALE GENOMIC DNA]</scope>
    <source>
        <strain>SL483</strain>
    </source>
</reference>
<protein>
    <recommendedName>
        <fullName evidence="1">Glycerol-3-phosphate acyltransferase</fullName>
    </recommendedName>
    <alternativeName>
        <fullName evidence="1">G3P acyltransferase</fullName>
        <shortName evidence="1">GPAT</shortName>
        <ecNumber evidence="1">2.3.1.15</ecNumber>
        <ecNumber evidence="1">2.3.1.n5</ecNumber>
    </alternativeName>
    <alternativeName>
        <fullName evidence="1">Lysophosphatidic acid synthase</fullName>
        <shortName evidence="1">LPA synthase</shortName>
    </alternativeName>
</protein>
<comment type="function">
    <text evidence="1">Catalyzes the transfer of an acyl group from acyl-ACP to glycerol-3-phosphate (G3P) to form lysophosphatidic acid (LPA). This enzyme can also utilize acyl-CoA as fatty acyl donor, but not acyl-PO(4).</text>
</comment>
<comment type="catalytic activity">
    <reaction evidence="1">
        <text>sn-glycerol 3-phosphate + an acyl-CoA = a 1-acyl-sn-glycero-3-phosphate + CoA</text>
        <dbReference type="Rhea" id="RHEA:15325"/>
        <dbReference type="ChEBI" id="CHEBI:57287"/>
        <dbReference type="ChEBI" id="CHEBI:57597"/>
        <dbReference type="ChEBI" id="CHEBI:57970"/>
        <dbReference type="ChEBI" id="CHEBI:58342"/>
        <dbReference type="EC" id="2.3.1.15"/>
    </reaction>
</comment>
<comment type="catalytic activity">
    <reaction evidence="1">
        <text>a fatty acyl-[ACP] + sn-glycerol 3-phosphate = a 1-acyl-sn-glycero-3-phosphate + holo-[ACP]</text>
        <dbReference type="Rhea" id="RHEA:42300"/>
        <dbReference type="Rhea" id="RHEA-COMP:9685"/>
        <dbReference type="Rhea" id="RHEA-COMP:14125"/>
        <dbReference type="ChEBI" id="CHEBI:57597"/>
        <dbReference type="ChEBI" id="CHEBI:57970"/>
        <dbReference type="ChEBI" id="CHEBI:64479"/>
        <dbReference type="ChEBI" id="CHEBI:138651"/>
        <dbReference type="EC" id="2.3.1.n5"/>
    </reaction>
</comment>
<comment type="pathway">
    <text evidence="1">Lipid metabolism; phospholipid metabolism.</text>
</comment>
<comment type="subunit">
    <text evidence="1">Probably interacts with PlsX.</text>
</comment>
<comment type="subcellular location">
    <subcellularLocation>
        <location evidence="1">Cell inner membrane</location>
        <topology evidence="1">Multi-pass membrane protein</topology>
    </subcellularLocation>
</comment>
<comment type="similarity">
    <text evidence="1">Belongs to the PlsY family.</text>
</comment>
<dbReference type="EC" id="2.3.1.15" evidence="1"/>
<dbReference type="EC" id="2.3.1.n5" evidence="1"/>
<dbReference type="EMBL" id="CP001138">
    <property type="protein sequence ID" value="ACH49422.1"/>
    <property type="molecule type" value="Genomic_DNA"/>
</dbReference>
<dbReference type="RefSeq" id="WP_001272784.1">
    <property type="nucleotide sequence ID" value="NC_011149.1"/>
</dbReference>
<dbReference type="SMR" id="B5F6A3"/>
<dbReference type="KEGG" id="sea:SeAg_B3393"/>
<dbReference type="HOGENOM" id="CLU_081254_0_2_6"/>
<dbReference type="UniPathway" id="UPA00085"/>
<dbReference type="Proteomes" id="UP000008819">
    <property type="component" value="Chromosome"/>
</dbReference>
<dbReference type="GO" id="GO:0005886">
    <property type="term" value="C:plasma membrane"/>
    <property type="evidence" value="ECO:0007669"/>
    <property type="project" value="UniProtKB-SubCell"/>
</dbReference>
<dbReference type="GO" id="GO:0043772">
    <property type="term" value="F:acyl-phosphate glycerol-3-phosphate acyltransferase activity"/>
    <property type="evidence" value="ECO:0007669"/>
    <property type="project" value="InterPro"/>
</dbReference>
<dbReference type="GO" id="GO:0004366">
    <property type="term" value="F:glycerol-3-phosphate O-acyltransferase activity"/>
    <property type="evidence" value="ECO:0007669"/>
    <property type="project" value="UniProtKB-UniRule"/>
</dbReference>
<dbReference type="GO" id="GO:0008654">
    <property type="term" value="P:phospholipid biosynthetic process"/>
    <property type="evidence" value="ECO:0007669"/>
    <property type="project" value="UniProtKB-UniRule"/>
</dbReference>
<dbReference type="HAMAP" id="MF_01043">
    <property type="entry name" value="PlsY"/>
    <property type="match status" value="1"/>
</dbReference>
<dbReference type="InterPro" id="IPR003811">
    <property type="entry name" value="G3P_acylTferase_PlsY"/>
</dbReference>
<dbReference type="NCBIfam" id="TIGR00023">
    <property type="entry name" value="glycerol-3-phosphate 1-O-acyltransferase PlsY"/>
    <property type="match status" value="1"/>
</dbReference>
<dbReference type="PANTHER" id="PTHR30309:SF0">
    <property type="entry name" value="GLYCEROL-3-PHOSPHATE ACYLTRANSFERASE-RELATED"/>
    <property type="match status" value="1"/>
</dbReference>
<dbReference type="PANTHER" id="PTHR30309">
    <property type="entry name" value="INNER MEMBRANE PROTEIN YGIH"/>
    <property type="match status" value="1"/>
</dbReference>
<dbReference type="Pfam" id="PF02660">
    <property type="entry name" value="G3P_acyltransf"/>
    <property type="match status" value="1"/>
</dbReference>
<dbReference type="SMART" id="SM01207">
    <property type="entry name" value="G3P_acyltransf"/>
    <property type="match status" value="1"/>
</dbReference>